<keyword id="KW-0687">Ribonucleoprotein</keyword>
<keyword id="KW-0689">Ribosomal protein</keyword>
<keyword id="KW-0694">RNA-binding</keyword>
<keyword id="KW-0699">rRNA-binding</keyword>
<sequence>MKITRKAATQRRHRRIRRKVFGTPERPRLAVFRSHRHIYAQVIDDVAQHTLVSASTLDRELREAFKDIGTATREAAAVVGRSVAQRALQAGICQVVFDRGGKLYHGRVQALAEAAREAGLQF</sequence>
<feature type="chain" id="PRO_0000251385" description="Large ribosomal subunit protein uL18">
    <location>
        <begin position="1"/>
        <end position="122"/>
    </location>
</feature>
<name>RL18_SYNJA</name>
<gene>
    <name evidence="1" type="primary">rplR</name>
    <name evidence="1" type="synonym">rpl18</name>
    <name type="ordered locus">CYA_1163</name>
</gene>
<evidence type="ECO:0000255" key="1">
    <source>
        <dbReference type="HAMAP-Rule" id="MF_01337"/>
    </source>
</evidence>
<evidence type="ECO:0000305" key="2"/>
<accession>Q2JV92</accession>
<reference key="1">
    <citation type="journal article" date="2007" name="ISME J.">
        <title>Population level functional diversity in a microbial community revealed by comparative genomic and metagenomic analyses.</title>
        <authorList>
            <person name="Bhaya D."/>
            <person name="Grossman A.R."/>
            <person name="Steunou A.-S."/>
            <person name="Khuri N."/>
            <person name="Cohan F.M."/>
            <person name="Hamamura N."/>
            <person name="Melendrez M.C."/>
            <person name="Bateson M.M."/>
            <person name="Ward D.M."/>
            <person name="Heidelberg J.F."/>
        </authorList>
    </citation>
    <scope>NUCLEOTIDE SEQUENCE [LARGE SCALE GENOMIC DNA]</scope>
    <source>
        <strain>JA-3-3Ab</strain>
    </source>
</reference>
<proteinExistence type="inferred from homology"/>
<dbReference type="EMBL" id="CP000239">
    <property type="protein sequence ID" value="ABC99351.1"/>
    <property type="molecule type" value="Genomic_DNA"/>
</dbReference>
<dbReference type="RefSeq" id="WP_011430032.1">
    <property type="nucleotide sequence ID" value="NC_007775.1"/>
</dbReference>
<dbReference type="SMR" id="Q2JV92"/>
<dbReference type="STRING" id="321327.CYA_1163"/>
<dbReference type="KEGG" id="cya:CYA_1163"/>
<dbReference type="eggNOG" id="COG0256">
    <property type="taxonomic scope" value="Bacteria"/>
</dbReference>
<dbReference type="HOGENOM" id="CLU_098841_0_1_3"/>
<dbReference type="OrthoDB" id="9810939at2"/>
<dbReference type="Proteomes" id="UP000008818">
    <property type="component" value="Chromosome"/>
</dbReference>
<dbReference type="GO" id="GO:0022625">
    <property type="term" value="C:cytosolic large ribosomal subunit"/>
    <property type="evidence" value="ECO:0007669"/>
    <property type="project" value="TreeGrafter"/>
</dbReference>
<dbReference type="GO" id="GO:0008097">
    <property type="term" value="F:5S rRNA binding"/>
    <property type="evidence" value="ECO:0007669"/>
    <property type="project" value="TreeGrafter"/>
</dbReference>
<dbReference type="GO" id="GO:0003735">
    <property type="term" value="F:structural constituent of ribosome"/>
    <property type="evidence" value="ECO:0007669"/>
    <property type="project" value="InterPro"/>
</dbReference>
<dbReference type="GO" id="GO:0006412">
    <property type="term" value="P:translation"/>
    <property type="evidence" value="ECO:0007669"/>
    <property type="project" value="UniProtKB-UniRule"/>
</dbReference>
<dbReference type="CDD" id="cd00432">
    <property type="entry name" value="Ribosomal_L18_L5e"/>
    <property type="match status" value="1"/>
</dbReference>
<dbReference type="FunFam" id="3.30.420.100:FF:000001">
    <property type="entry name" value="50S ribosomal protein L18"/>
    <property type="match status" value="1"/>
</dbReference>
<dbReference type="Gene3D" id="3.30.420.100">
    <property type="match status" value="1"/>
</dbReference>
<dbReference type="HAMAP" id="MF_01337_B">
    <property type="entry name" value="Ribosomal_uL18_B"/>
    <property type="match status" value="1"/>
</dbReference>
<dbReference type="InterPro" id="IPR004389">
    <property type="entry name" value="Ribosomal_uL18_bac-type"/>
</dbReference>
<dbReference type="InterPro" id="IPR005484">
    <property type="entry name" value="Ribosomal_uL18_bac/euk"/>
</dbReference>
<dbReference type="NCBIfam" id="TIGR00060">
    <property type="entry name" value="L18_bact"/>
    <property type="match status" value="1"/>
</dbReference>
<dbReference type="PANTHER" id="PTHR12899">
    <property type="entry name" value="39S RIBOSOMAL PROTEIN L18, MITOCHONDRIAL"/>
    <property type="match status" value="1"/>
</dbReference>
<dbReference type="PANTHER" id="PTHR12899:SF3">
    <property type="entry name" value="LARGE RIBOSOMAL SUBUNIT PROTEIN UL18M"/>
    <property type="match status" value="1"/>
</dbReference>
<dbReference type="Pfam" id="PF00861">
    <property type="entry name" value="Ribosomal_L18p"/>
    <property type="match status" value="1"/>
</dbReference>
<dbReference type="SUPFAM" id="SSF53137">
    <property type="entry name" value="Translational machinery components"/>
    <property type="match status" value="1"/>
</dbReference>
<protein>
    <recommendedName>
        <fullName evidence="1">Large ribosomal subunit protein uL18</fullName>
    </recommendedName>
    <alternativeName>
        <fullName evidence="2">50S ribosomal protein L18</fullName>
    </alternativeName>
</protein>
<comment type="function">
    <text evidence="1">This is one of the proteins that bind and probably mediate the attachment of the 5S RNA into the large ribosomal subunit, where it forms part of the central protuberance.</text>
</comment>
<comment type="subunit">
    <text evidence="1">Part of the 50S ribosomal subunit; part of the 5S rRNA/L5/L18/L25 subcomplex. Contacts the 5S and 23S rRNAs.</text>
</comment>
<comment type="similarity">
    <text evidence="1">Belongs to the universal ribosomal protein uL18 family.</text>
</comment>
<organism>
    <name type="scientific">Synechococcus sp. (strain JA-3-3Ab)</name>
    <name type="common">Cyanobacteria bacterium Yellowstone A-Prime</name>
    <dbReference type="NCBI Taxonomy" id="321327"/>
    <lineage>
        <taxon>Bacteria</taxon>
        <taxon>Bacillati</taxon>
        <taxon>Cyanobacteriota</taxon>
        <taxon>Cyanophyceae</taxon>
        <taxon>Synechococcales</taxon>
        <taxon>Synechococcaceae</taxon>
        <taxon>Synechococcus</taxon>
    </lineage>
</organism>